<sequence length="147" mass="16272">MRTTFLAKPGEIEKKWYIIDAKDVVLGRLSTVVASILRGKNKPTFTPNVDMGDHVIIINAAEVKLTGKKATDKVYYHHSNHPGGLKARTAGNYREFNPEKLLELSIHGMLPKNTLGRKQGLNLHVYAGAEHAHAAQQPEALDINKLV</sequence>
<feature type="chain" id="PRO_1000144147" description="Large ribosomal subunit protein uL13">
    <location>
        <begin position="1"/>
        <end position="147"/>
    </location>
</feature>
<accession>B1MVY2</accession>
<name>RL13_LEUCK</name>
<evidence type="ECO:0000255" key="1">
    <source>
        <dbReference type="HAMAP-Rule" id="MF_01366"/>
    </source>
</evidence>
<evidence type="ECO:0000305" key="2"/>
<protein>
    <recommendedName>
        <fullName evidence="1">Large ribosomal subunit protein uL13</fullName>
    </recommendedName>
    <alternativeName>
        <fullName evidence="2">50S ribosomal protein L13</fullName>
    </alternativeName>
</protein>
<keyword id="KW-1185">Reference proteome</keyword>
<keyword id="KW-0687">Ribonucleoprotein</keyword>
<keyword id="KW-0689">Ribosomal protein</keyword>
<dbReference type="EMBL" id="DQ489736">
    <property type="protein sequence ID" value="ACA83386.1"/>
    <property type="molecule type" value="Genomic_DNA"/>
</dbReference>
<dbReference type="RefSeq" id="WP_004899373.1">
    <property type="nucleotide sequence ID" value="NC_010471.1"/>
</dbReference>
<dbReference type="SMR" id="B1MVY2"/>
<dbReference type="STRING" id="349519.LCK_01563"/>
<dbReference type="GeneID" id="61103274"/>
<dbReference type="KEGG" id="lci:LCK_01563"/>
<dbReference type="eggNOG" id="COG0102">
    <property type="taxonomic scope" value="Bacteria"/>
</dbReference>
<dbReference type="HOGENOM" id="CLU_082184_2_1_9"/>
<dbReference type="OrthoDB" id="9801330at2"/>
<dbReference type="Proteomes" id="UP000002166">
    <property type="component" value="Chromosome"/>
</dbReference>
<dbReference type="GO" id="GO:0022625">
    <property type="term" value="C:cytosolic large ribosomal subunit"/>
    <property type="evidence" value="ECO:0007669"/>
    <property type="project" value="TreeGrafter"/>
</dbReference>
<dbReference type="GO" id="GO:0003729">
    <property type="term" value="F:mRNA binding"/>
    <property type="evidence" value="ECO:0007669"/>
    <property type="project" value="TreeGrafter"/>
</dbReference>
<dbReference type="GO" id="GO:0003735">
    <property type="term" value="F:structural constituent of ribosome"/>
    <property type="evidence" value="ECO:0007669"/>
    <property type="project" value="InterPro"/>
</dbReference>
<dbReference type="GO" id="GO:0017148">
    <property type="term" value="P:negative regulation of translation"/>
    <property type="evidence" value="ECO:0007669"/>
    <property type="project" value="TreeGrafter"/>
</dbReference>
<dbReference type="GO" id="GO:0006412">
    <property type="term" value="P:translation"/>
    <property type="evidence" value="ECO:0007669"/>
    <property type="project" value="UniProtKB-UniRule"/>
</dbReference>
<dbReference type="CDD" id="cd00392">
    <property type="entry name" value="Ribosomal_L13"/>
    <property type="match status" value="1"/>
</dbReference>
<dbReference type="FunFam" id="3.90.1180.10:FF:000001">
    <property type="entry name" value="50S ribosomal protein L13"/>
    <property type="match status" value="1"/>
</dbReference>
<dbReference type="Gene3D" id="3.90.1180.10">
    <property type="entry name" value="Ribosomal protein L13"/>
    <property type="match status" value="1"/>
</dbReference>
<dbReference type="HAMAP" id="MF_01366">
    <property type="entry name" value="Ribosomal_uL13"/>
    <property type="match status" value="1"/>
</dbReference>
<dbReference type="InterPro" id="IPR005822">
    <property type="entry name" value="Ribosomal_uL13"/>
</dbReference>
<dbReference type="InterPro" id="IPR005823">
    <property type="entry name" value="Ribosomal_uL13_bac-type"/>
</dbReference>
<dbReference type="InterPro" id="IPR036899">
    <property type="entry name" value="Ribosomal_uL13_sf"/>
</dbReference>
<dbReference type="NCBIfam" id="TIGR01066">
    <property type="entry name" value="rplM_bact"/>
    <property type="match status" value="1"/>
</dbReference>
<dbReference type="PANTHER" id="PTHR11545:SF2">
    <property type="entry name" value="LARGE RIBOSOMAL SUBUNIT PROTEIN UL13M"/>
    <property type="match status" value="1"/>
</dbReference>
<dbReference type="PANTHER" id="PTHR11545">
    <property type="entry name" value="RIBOSOMAL PROTEIN L13"/>
    <property type="match status" value="1"/>
</dbReference>
<dbReference type="Pfam" id="PF00572">
    <property type="entry name" value="Ribosomal_L13"/>
    <property type="match status" value="1"/>
</dbReference>
<dbReference type="PIRSF" id="PIRSF002181">
    <property type="entry name" value="Ribosomal_L13"/>
    <property type="match status" value="1"/>
</dbReference>
<dbReference type="SUPFAM" id="SSF52161">
    <property type="entry name" value="Ribosomal protein L13"/>
    <property type="match status" value="1"/>
</dbReference>
<gene>
    <name evidence="1" type="primary">rplM</name>
    <name type="ordered locus">LCK_01563</name>
</gene>
<reference key="1">
    <citation type="journal article" date="2008" name="J. Bacteriol.">
        <title>Complete genome sequence of Leuconostoc citreum KM20.</title>
        <authorList>
            <person name="Kim J.F."/>
            <person name="Jeong H."/>
            <person name="Lee J.-S."/>
            <person name="Choi S.-H."/>
            <person name="Ha M."/>
            <person name="Hur C.-G."/>
            <person name="Kim J.-S."/>
            <person name="Lee S."/>
            <person name="Park H.-S."/>
            <person name="Park Y.-H."/>
            <person name="Oh T.K."/>
        </authorList>
    </citation>
    <scope>NUCLEOTIDE SEQUENCE [LARGE SCALE GENOMIC DNA]</scope>
    <source>
        <strain>KM20</strain>
    </source>
</reference>
<proteinExistence type="inferred from homology"/>
<comment type="function">
    <text evidence="1">This protein is one of the early assembly proteins of the 50S ribosomal subunit, although it is not seen to bind rRNA by itself. It is important during the early stages of 50S assembly.</text>
</comment>
<comment type="subunit">
    <text evidence="1">Part of the 50S ribosomal subunit.</text>
</comment>
<comment type="similarity">
    <text evidence="1">Belongs to the universal ribosomal protein uL13 family.</text>
</comment>
<organism>
    <name type="scientific">Leuconostoc citreum (strain KM20)</name>
    <dbReference type="NCBI Taxonomy" id="349519"/>
    <lineage>
        <taxon>Bacteria</taxon>
        <taxon>Bacillati</taxon>
        <taxon>Bacillota</taxon>
        <taxon>Bacilli</taxon>
        <taxon>Lactobacillales</taxon>
        <taxon>Lactobacillaceae</taxon>
        <taxon>Leuconostoc</taxon>
    </lineage>
</organism>